<gene>
    <name evidence="1" type="primary">lpxK</name>
    <name type="ordered locus">CT1676</name>
</gene>
<accession>Q8KBV6</accession>
<evidence type="ECO:0000255" key="1">
    <source>
        <dbReference type="HAMAP-Rule" id="MF_00409"/>
    </source>
</evidence>
<evidence type="ECO:0000305" key="2"/>
<protein>
    <recommendedName>
        <fullName evidence="1">Tetraacyldisaccharide 4'-kinase</fullName>
        <ecNumber evidence="1">2.7.1.130</ecNumber>
    </recommendedName>
    <alternativeName>
        <fullName evidence="1">Lipid A 4'-kinase</fullName>
    </alternativeName>
</protein>
<comment type="function">
    <text evidence="1">Transfers the gamma-phosphate of ATP to the 4'-position of a tetraacyldisaccharide 1-phosphate intermediate (termed DS-1-P) to form tetraacyldisaccharide 1,4'-bis-phosphate (lipid IVA).</text>
</comment>
<comment type="catalytic activity">
    <reaction evidence="1">
        <text>a lipid A disaccharide + ATP = a lipid IVA + ADP + H(+)</text>
        <dbReference type="Rhea" id="RHEA:67840"/>
        <dbReference type="ChEBI" id="CHEBI:15378"/>
        <dbReference type="ChEBI" id="CHEBI:30616"/>
        <dbReference type="ChEBI" id="CHEBI:176343"/>
        <dbReference type="ChEBI" id="CHEBI:176425"/>
        <dbReference type="ChEBI" id="CHEBI:456216"/>
        <dbReference type="EC" id="2.7.1.130"/>
    </reaction>
</comment>
<comment type="pathway">
    <text evidence="1">Glycolipid biosynthesis; lipid IV(A) biosynthesis; lipid IV(A) from (3R)-3-hydroxytetradecanoyl-[acyl-carrier-protein] and UDP-N-acetyl-alpha-D-glucosamine: step 6/6.</text>
</comment>
<comment type="similarity">
    <text evidence="1">Belongs to the LpxK family.</text>
</comment>
<comment type="sequence caution" evidence="2">
    <conflict type="erroneous initiation">
        <sequence resource="EMBL-CDS" id="AAM72901"/>
    </conflict>
</comment>
<sequence>MHNRSAAILLRPAAALYGMVMSLRNCLYDQGIFKSWHSPIPVVSVGNITTGGTGKTPLVDWIVKFYEASGIATAIVSRGYGRRTKGVQLVSDGGRLLLGSRDAGDETAMLAARNPRTIVVVAEKRVEGVQFLMHQFADRLPGVIVLDDAFQHRKIARDLDIVVVNAGAPEEIDAMLPAGRLREPLRGLRRAHLIILGKITDDANSATLLQTLRETGKPVIRSKIKPGKLIHVDGSENETNESVKTLAFAGIGAPEGFLHSLKTAGIKIAATKFFRDHEPYTESAIRSIIGEAKRQGLVPVTTEKDWFRIADEPELAEMLRQVGCRYLTITPEFPDGTQELERQLLDVLKR</sequence>
<organism>
    <name type="scientific">Chlorobaculum tepidum (strain ATCC 49652 / DSM 12025 / NBRC 103806 / TLS)</name>
    <name type="common">Chlorobium tepidum</name>
    <dbReference type="NCBI Taxonomy" id="194439"/>
    <lineage>
        <taxon>Bacteria</taxon>
        <taxon>Pseudomonadati</taxon>
        <taxon>Chlorobiota</taxon>
        <taxon>Chlorobiia</taxon>
        <taxon>Chlorobiales</taxon>
        <taxon>Chlorobiaceae</taxon>
        <taxon>Chlorobaculum</taxon>
    </lineage>
</organism>
<name>LPXK_CHLTE</name>
<proteinExistence type="inferred from homology"/>
<keyword id="KW-0067">ATP-binding</keyword>
<keyword id="KW-0418">Kinase</keyword>
<keyword id="KW-0441">Lipid A biosynthesis</keyword>
<keyword id="KW-0444">Lipid biosynthesis</keyword>
<keyword id="KW-0443">Lipid metabolism</keyword>
<keyword id="KW-0547">Nucleotide-binding</keyword>
<keyword id="KW-1185">Reference proteome</keyword>
<keyword id="KW-0808">Transferase</keyword>
<feature type="chain" id="PRO_0000340828" description="Tetraacyldisaccharide 4'-kinase">
    <location>
        <begin position="1"/>
        <end position="350"/>
    </location>
</feature>
<feature type="binding site" evidence="1">
    <location>
        <begin position="49"/>
        <end position="56"/>
    </location>
    <ligand>
        <name>ATP</name>
        <dbReference type="ChEBI" id="CHEBI:30616"/>
    </ligand>
</feature>
<reference key="1">
    <citation type="journal article" date="2002" name="Proc. Natl. Acad. Sci. U.S.A.">
        <title>The complete genome sequence of Chlorobium tepidum TLS, a photosynthetic, anaerobic, green-sulfur bacterium.</title>
        <authorList>
            <person name="Eisen J.A."/>
            <person name="Nelson K.E."/>
            <person name="Paulsen I.T."/>
            <person name="Heidelberg J.F."/>
            <person name="Wu M."/>
            <person name="Dodson R.J."/>
            <person name="DeBoy R.T."/>
            <person name="Gwinn M.L."/>
            <person name="Nelson W.C."/>
            <person name="Haft D.H."/>
            <person name="Hickey E.K."/>
            <person name="Peterson J.D."/>
            <person name="Durkin A.S."/>
            <person name="Kolonay J.F."/>
            <person name="Yang F."/>
            <person name="Holt I.E."/>
            <person name="Umayam L.A."/>
            <person name="Mason T.M."/>
            <person name="Brenner M."/>
            <person name="Shea T.P."/>
            <person name="Parksey D.S."/>
            <person name="Nierman W.C."/>
            <person name="Feldblyum T.V."/>
            <person name="Hansen C.L."/>
            <person name="Craven M.B."/>
            <person name="Radune D."/>
            <person name="Vamathevan J.J."/>
            <person name="Khouri H.M."/>
            <person name="White O."/>
            <person name="Gruber T.M."/>
            <person name="Ketchum K.A."/>
            <person name="Venter J.C."/>
            <person name="Tettelin H."/>
            <person name="Bryant D.A."/>
            <person name="Fraser C.M."/>
        </authorList>
    </citation>
    <scope>NUCLEOTIDE SEQUENCE [LARGE SCALE GENOMIC DNA]</scope>
    <source>
        <strain>ATCC 49652 / DSM 12025 / NBRC 103806 / TLS</strain>
    </source>
</reference>
<dbReference type="EC" id="2.7.1.130" evidence="1"/>
<dbReference type="EMBL" id="AE006470">
    <property type="protein sequence ID" value="AAM72901.1"/>
    <property type="status" value="ALT_INIT"/>
    <property type="molecule type" value="Genomic_DNA"/>
</dbReference>
<dbReference type="RefSeq" id="NP_662559.1">
    <property type="nucleotide sequence ID" value="NC_002932.3"/>
</dbReference>
<dbReference type="RefSeq" id="WP_164927066.1">
    <property type="nucleotide sequence ID" value="NC_002932.3"/>
</dbReference>
<dbReference type="SMR" id="Q8KBV6"/>
<dbReference type="STRING" id="194439.CT1676"/>
<dbReference type="EnsemblBacteria" id="AAM72901">
    <property type="protein sequence ID" value="AAM72901"/>
    <property type="gene ID" value="CT1676"/>
</dbReference>
<dbReference type="KEGG" id="cte:CT1676"/>
<dbReference type="PATRIC" id="fig|194439.7.peg.1514"/>
<dbReference type="eggNOG" id="COG1663">
    <property type="taxonomic scope" value="Bacteria"/>
</dbReference>
<dbReference type="HOGENOM" id="CLU_038816_6_0_10"/>
<dbReference type="OrthoDB" id="9766423at2"/>
<dbReference type="UniPathway" id="UPA00359">
    <property type="reaction ID" value="UER00482"/>
</dbReference>
<dbReference type="Proteomes" id="UP000001007">
    <property type="component" value="Chromosome"/>
</dbReference>
<dbReference type="GO" id="GO:0005886">
    <property type="term" value="C:plasma membrane"/>
    <property type="evidence" value="ECO:0007669"/>
    <property type="project" value="TreeGrafter"/>
</dbReference>
<dbReference type="GO" id="GO:0005524">
    <property type="term" value="F:ATP binding"/>
    <property type="evidence" value="ECO:0007669"/>
    <property type="project" value="UniProtKB-UniRule"/>
</dbReference>
<dbReference type="GO" id="GO:0009029">
    <property type="term" value="F:tetraacyldisaccharide 4'-kinase activity"/>
    <property type="evidence" value="ECO:0007669"/>
    <property type="project" value="UniProtKB-UniRule"/>
</dbReference>
<dbReference type="GO" id="GO:0009245">
    <property type="term" value="P:lipid A biosynthetic process"/>
    <property type="evidence" value="ECO:0007669"/>
    <property type="project" value="UniProtKB-UniRule"/>
</dbReference>
<dbReference type="GO" id="GO:0009244">
    <property type="term" value="P:lipopolysaccharide core region biosynthetic process"/>
    <property type="evidence" value="ECO:0007669"/>
    <property type="project" value="TreeGrafter"/>
</dbReference>
<dbReference type="HAMAP" id="MF_00409">
    <property type="entry name" value="LpxK"/>
    <property type="match status" value="1"/>
</dbReference>
<dbReference type="InterPro" id="IPR003758">
    <property type="entry name" value="LpxK"/>
</dbReference>
<dbReference type="InterPro" id="IPR027417">
    <property type="entry name" value="P-loop_NTPase"/>
</dbReference>
<dbReference type="NCBIfam" id="TIGR00682">
    <property type="entry name" value="lpxK"/>
    <property type="match status" value="1"/>
</dbReference>
<dbReference type="PANTHER" id="PTHR42724">
    <property type="entry name" value="TETRAACYLDISACCHARIDE 4'-KINASE"/>
    <property type="match status" value="1"/>
</dbReference>
<dbReference type="PANTHER" id="PTHR42724:SF1">
    <property type="entry name" value="TETRAACYLDISACCHARIDE 4'-KINASE, MITOCHONDRIAL-RELATED"/>
    <property type="match status" value="1"/>
</dbReference>
<dbReference type="Pfam" id="PF02606">
    <property type="entry name" value="LpxK"/>
    <property type="match status" value="1"/>
</dbReference>
<dbReference type="SUPFAM" id="SSF52540">
    <property type="entry name" value="P-loop containing nucleoside triphosphate hydrolases"/>
    <property type="match status" value="1"/>
</dbReference>